<gene>
    <name evidence="1" type="primary">nqrB</name>
    <name type="ordered locus">NTHI0255</name>
</gene>
<feature type="chain" id="PRO_1000060138" description="Na(+)-translocating NADH-quinone reductase subunit B">
    <location>
        <begin position="1"/>
        <end position="411"/>
    </location>
</feature>
<feature type="transmembrane region" description="Helical" evidence="1">
    <location>
        <begin position="56"/>
        <end position="76"/>
    </location>
</feature>
<feature type="transmembrane region" description="Helical" evidence="1">
    <location>
        <begin position="120"/>
        <end position="140"/>
    </location>
</feature>
<feature type="transmembrane region" description="Helical" evidence="1">
    <location>
        <begin position="166"/>
        <end position="186"/>
    </location>
</feature>
<feature type="transmembrane region" description="Helical" evidence="1">
    <location>
        <begin position="272"/>
        <end position="292"/>
    </location>
</feature>
<feature type="transmembrane region" description="Helical" evidence="1">
    <location>
        <begin position="294"/>
        <end position="314"/>
    </location>
</feature>
<feature type="transmembrane region" description="Helical" evidence="1">
    <location>
        <begin position="319"/>
        <end position="339"/>
    </location>
</feature>
<feature type="transmembrane region" description="Helical" evidence="1">
    <location>
        <begin position="348"/>
        <end position="368"/>
    </location>
</feature>
<feature type="transmembrane region" description="Helical" evidence="1">
    <location>
        <begin position="378"/>
        <end position="398"/>
    </location>
</feature>
<feature type="modified residue" description="FMN phosphoryl threonine" evidence="1">
    <location>
        <position position="233"/>
    </location>
</feature>
<proteinExistence type="inferred from homology"/>
<organism>
    <name type="scientific">Haemophilus influenzae (strain 86-028NP)</name>
    <dbReference type="NCBI Taxonomy" id="281310"/>
    <lineage>
        <taxon>Bacteria</taxon>
        <taxon>Pseudomonadati</taxon>
        <taxon>Pseudomonadota</taxon>
        <taxon>Gammaproteobacteria</taxon>
        <taxon>Pasteurellales</taxon>
        <taxon>Pasteurellaceae</taxon>
        <taxon>Haemophilus</taxon>
    </lineage>
</organism>
<sequence length="411" mass="44729">MGLKNLFEKMEPAFLPGGKYSKLYPIFESIYTLLYTPGTVTHKNTHVRDALDSKRMMITVFLALFPAIFYGMYNVGNQAIPALNQLGNLDQLIANDWHYALASSLGLDLTANATWGSKMALGAIFFLPIYLVVFTVCTIWELLFSVVRGHEVNEGMFVSTILFALIVPPTLPLWQAALGITFGIIVAKEIFGGVGRNFMNPALAGRAFLFFAYPAQISGDTVWTAADGFSGATALSQWSQGGQGALQHTVTGAPITWMDAFVGNLPGSMGEVSTLAILIGGAVIVFTRIAAWRIIAGVMIGMIATSTLFNLIGSETNPMFSMPWHWHFVLGGFALGMVFMATDPVSASFTNTGKWWYGALIGVMAVLIRTVNPAYPEGMMLAILFANLFAPIFDYIVVQANIKRRRARTNG</sequence>
<reference key="1">
    <citation type="journal article" date="2005" name="J. Bacteriol.">
        <title>Genomic sequence of an otitis media isolate of nontypeable Haemophilus influenzae: comparative study with H. influenzae serotype d, strain KW20.</title>
        <authorList>
            <person name="Harrison A."/>
            <person name="Dyer D.W."/>
            <person name="Gillaspy A."/>
            <person name="Ray W.C."/>
            <person name="Mungur R."/>
            <person name="Carson M.B."/>
            <person name="Zhong H."/>
            <person name="Gipson J."/>
            <person name="Gipson M."/>
            <person name="Johnson L.S."/>
            <person name="Lewis L."/>
            <person name="Bakaletz L.O."/>
            <person name="Munson R.S. Jr."/>
        </authorList>
    </citation>
    <scope>NUCLEOTIDE SEQUENCE [LARGE SCALE GENOMIC DNA]</scope>
    <source>
        <strain>86-028NP</strain>
    </source>
</reference>
<dbReference type="EC" id="7.2.1.1" evidence="1"/>
<dbReference type="EMBL" id="CP000057">
    <property type="protein sequence ID" value="AAX87224.1"/>
    <property type="molecule type" value="Genomic_DNA"/>
</dbReference>
<dbReference type="RefSeq" id="WP_005653793.1">
    <property type="nucleotide sequence ID" value="NC_007146.2"/>
</dbReference>
<dbReference type="SMR" id="Q4QP23"/>
<dbReference type="KEGG" id="hit:NTHI0255"/>
<dbReference type="HOGENOM" id="CLU_042020_1_1_6"/>
<dbReference type="Proteomes" id="UP000002525">
    <property type="component" value="Chromosome"/>
</dbReference>
<dbReference type="GO" id="GO:0005886">
    <property type="term" value="C:plasma membrane"/>
    <property type="evidence" value="ECO:0007669"/>
    <property type="project" value="UniProtKB-SubCell"/>
</dbReference>
<dbReference type="GO" id="GO:0010181">
    <property type="term" value="F:FMN binding"/>
    <property type="evidence" value="ECO:0007669"/>
    <property type="project" value="InterPro"/>
</dbReference>
<dbReference type="GO" id="GO:0016655">
    <property type="term" value="F:oxidoreductase activity, acting on NAD(P)H, quinone or similar compound as acceptor"/>
    <property type="evidence" value="ECO:0007669"/>
    <property type="project" value="UniProtKB-UniRule"/>
</dbReference>
<dbReference type="GO" id="GO:0022904">
    <property type="term" value="P:respiratory electron transport chain"/>
    <property type="evidence" value="ECO:0007669"/>
    <property type="project" value="InterPro"/>
</dbReference>
<dbReference type="GO" id="GO:0006814">
    <property type="term" value="P:sodium ion transport"/>
    <property type="evidence" value="ECO:0007669"/>
    <property type="project" value="UniProtKB-UniRule"/>
</dbReference>
<dbReference type="GO" id="GO:0055085">
    <property type="term" value="P:transmembrane transport"/>
    <property type="evidence" value="ECO:0007669"/>
    <property type="project" value="InterPro"/>
</dbReference>
<dbReference type="HAMAP" id="MF_00426">
    <property type="entry name" value="NqrB"/>
    <property type="match status" value="1"/>
</dbReference>
<dbReference type="InterPro" id="IPR010966">
    <property type="entry name" value="NqrB"/>
</dbReference>
<dbReference type="InterPro" id="IPR004338">
    <property type="entry name" value="NqrB/RnfD"/>
</dbReference>
<dbReference type="NCBIfam" id="TIGR01937">
    <property type="entry name" value="nqrB"/>
    <property type="match status" value="1"/>
</dbReference>
<dbReference type="NCBIfam" id="NF003756">
    <property type="entry name" value="PRK05349.1"/>
    <property type="match status" value="1"/>
</dbReference>
<dbReference type="PANTHER" id="PTHR30578">
    <property type="entry name" value="ELECTRON TRANSPORT COMPLEX PROTEIN RNFD"/>
    <property type="match status" value="1"/>
</dbReference>
<dbReference type="PANTHER" id="PTHR30578:SF1">
    <property type="entry name" value="NA(+)-TRANSLOCATING NADH-QUINONE REDUCTASE SUBUNIT B"/>
    <property type="match status" value="1"/>
</dbReference>
<dbReference type="Pfam" id="PF03116">
    <property type="entry name" value="NQR2_RnfD_RnfE"/>
    <property type="match status" value="1"/>
</dbReference>
<dbReference type="PIRSF" id="PIRSF016055">
    <property type="entry name" value="NADH-UbQ_OxRdtase_B_su"/>
    <property type="match status" value="1"/>
</dbReference>
<accession>Q4QP23</accession>
<keyword id="KW-0997">Cell inner membrane</keyword>
<keyword id="KW-1003">Cell membrane</keyword>
<keyword id="KW-0285">Flavoprotein</keyword>
<keyword id="KW-0288">FMN</keyword>
<keyword id="KW-0406">Ion transport</keyword>
<keyword id="KW-0472">Membrane</keyword>
<keyword id="KW-0520">NAD</keyword>
<keyword id="KW-0597">Phosphoprotein</keyword>
<keyword id="KW-0915">Sodium</keyword>
<keyword id="KW-0739">Sodium transport</keyword>
<keyword id="KW-1278">Translocase</keyword>
<keyword id="KW-0812">Transmembrane</keyword>
<keyword id="KW-1133">Transmembrane helix</keyword>
<keyword id="KW-0813">Transport</keyword>
<keyword id="KW-0830">Ubiquinone</keyword>
<name>NQRB_HAEI8</name>
<comment type="function">
    <text evidence="1">NQR complex catalyzes the reduction of ubiquinone-1 to ubiquinol by two successive reactions, coupled with the transport of Na(+) ions from the cytoplasm to the periplasm. NqrA to NqrE are probably involved in the second step, the conversion of ubisemiquinone to ubiquinol.</text>
</comment>
<comment type="catalytic activity">
    <reaction evidence="1">
        <text>a ubiquinone + n Na(+)(in) + NADH + H(+) = a ubiquinol + n Na(+)(out) + NAD(+)</text>
        <dbReference type="Rhea" id="RHEA:47748"/>
        <dbReference type="Rhea" id="RHEA-COMP:9565"/>
        <dbReference type="Rhea" id="RHEA-COMP:9566"/>
        <dbReference type="ChEBI" id="CHEBI:15378"/>
        <dbReference type="ChEBI" id="CHEBI:16389"/>
        <dbReference type="ChEBI" id="CHEBI:17976"/>
        <dbReference type="ChEBI" id="CHEBI:29101"/>
        <dbReference type="ChEBI" id="CHEBI:57540"/>
        <dbReference type="ChEBI" id="CHEBI:57945"/>
        <dbReference type="EC" id="7.2.1.1"/>
    </reaction>
</comment>
<comment type="cofactor">
    <cofactor evidence="1">
        <name>FMN</name>
        <dbReference type="ChEBI" id="CHEBI:58210"/>
    </cofactor>
</comment>
<comment type="subunit">
    <text evidence="1">Composed of six subunits; NqrA, NqrB, NqrC, NqrD, NqrE and NqrF.</text>
</comment>
<comment type="subcellular location">
    <subcellularLocation>
        <location evidence="1">Cell inner membrane</location>
        <topology evidence="1">Multi-pass membrane protein</topology>
    </subcellularLocation>
</comment>
<comment type="similarity">
    <text evidence="1">Belongs to the NqrB/RnfD family.</text>
</comment>
<evidence type="ECO:0000255" key="1">
    <source>
        <dbReference type="HAMAP-Rule" id="MF_00426"/>
    </source>
</evidence>
<protein>
    <recommendedName>
        <fullName evidence="1">Na(+)-translocating NADH-quinone reductase subunit B</fullName>
        <shortName evidence="1">Na(+)-NQR subunit B</shortName>
        <shortName evidence="1">Na(+)-translocating NQR subunit B</shortName>
        <ecNumber evidence="1">7.2.1.1</ecNumber>
    </recommendedName>
    <alternativeName>
        <fullName evidence="1">NQR complex subunit B</fullName>
    </alternativeName>
    <alternativeName>
        <fullName evidence="1">NQR-1 subunit B</fullName>
    </alternativeName>
</protein>